<accession>Q8YHN0</accession>
<dbReference type="EMBL" id="AE008917">
    <property type="protein sequence ID" value="AAL51948.1"/>
    <property type="molecule type" value="Genomic_DNA"/>
</dbReference>
<dbReference type="PIR" id="AI3347">
    <property type="entry name" value="AI3347"/>
</dbReference>
<dbReference type="RefSeq" id="WP_004683923.1">
    <property type="nucleotide sequence ID" value="NZ_GG703780.1"/>
</dbReference>
<dbReference type="SMR" id="Q8YHN0"/>
<dbReference type="GeneID" id="97533534"/>
<dbReference type="KEGG" id="bme:BMEI0767"/>
<dbReference type="KEGG" id="bmel:DK63_655"/>
<dbReference type="PATRIC" id="fig|224914.52.peg.686"/>
<dbReference type="eggNOG" id="COG0093">
    <property type="taxonomic scope" value="Bacteria"/>
</dbReference>
<dbReference type="PhylomeDB" id="Q8YHN0"/>
<dbReference type="Proteomes" id="UP000000419">
    <property type="component" value="Chromosome I"/>
</dbReference>
<dbReference type="GO" id="GO:0022625">
    <property type="term" value="C:cytosolic large ribosomal subunit"/>
    <property type="evidence" value="ECO:0007669"/>
    <property type="project" value="TreeGrafter"/>
</dbReference>
<dbReference type="GO" id="GO:0070180">
    <property type="term" value="F:large ribosomal subunit rRNA binding"/>
    <property type="evidence" value="ECO:0007669"/>
    <property type="project" value="TreeGrafter"/>
</dbReference>
<dbReference type="GO" id="GO:0003735">
    <property type="term" value="F:structural constituent of ribosome"/>
    <property type="evidence" value="ECO:0007669"/>
    <property type="project" value="InterPro"/>
</dbReference>
<dbReference type="GO" id="GO:0006412">
    <property type="term" value="P:translation"/>
    <property type="evidence" value="ECO:0007669"/>
    <property type="project" value="UniProtKB-UniRule"/>
</dbReference>
<dbReference type="CDD" id="cd00337">
    <property type="entry name" value="Ribosomal_uL14"/>
    <property type="match status" value="1"/>
</dbReference>
<dbReference type="FunFam" id="2.40.150.20:FF:000001">
    <property type="entry name" value="50S ribosomal protein L14"/>
    <property type="match status" value="1"/>
</dbReference>
<dbReference type="Gene3D" id="2.40.150.20">
    <property type="entry name" value="Ribosomal protein L14"/>
    <property type="match status" value="1"/>
</dbReference>
<dbReference type="HAMAP" id="MF_01367">
    <property type="entry name" value="Ribosomal_uL14"/>
    <property type="match status" value="1"/>
</dbReference>
<dbReference type="InterPro" id="IPR000218">
    <property type="entry name" value="Ribosomal_uL14"/>
</dbReference>
<dbReference type="InterPro" id="IPR005745">
    <property type="entry name" value="Ribosomal_uL14_bac-type"/>
</dbReference>
<dbReference type="InterPro" id="IPR019972">
    <property type="entry name" value="Ribosomal_uL14_CS"/>
</dbReference>
<dbReference type="InterPro" id="IPR036853">
    <property type="entry name" value="Ribosomal_uL14_sf"/>
</dbReference>
<dbReference type="NCBIfam" id="TIGR01067">
    <property type="entry name" value="rplN_bact"/>
    <property type="match status" value="1"/>
</dbReference>
<dbReference type="PANTHER" id="PTHR11761">
    <property type="entry name" value="50S/60S RIBOSOMAL PROTEIN L14/L23"/>
    <property type="match status" value="1"/>
</dbReference>
<dbReference type="PANTHER" id="PTHR11761:SF3">
    <property type="entry name" value="LARGE RIBOSOMAL SUBUNIT PROTEIN UL14M"/>
    <property type="match status" value="1"/>
</dbReference>
<dbReference type="Pfam" id="PF00238">
    <property type="entry name" value="Ribosomal_L14"/>
    <property type="match status" value="1"/>
</dbReference>
<dbReference type="SMART" id="SM01374">
    <property type="entry name" value="Ribosomal_L14"/>
    <property type="match status" value="1"/>
</dbReference>
<dbReference type="SUPFAM" id="SSF50193">
    <property type="entry name" value="Ribosomal protein L14"/>
    <property type="match status" value="1"/>
</dbReference>
<dbReference type="PROSITE" id="PS00049">
    <property type="entry name" value="RIBOSOMAL_L14"/>
    <property type="match status" value="1"/>
</dbReference>
<gene>
    <name evidence="1" type="primary">rplN</name>
    <name type="ordered locus">BMEI0767</name>
</gene>
<keyword id="KW-0687">Ribonucleoprotein</keyword>
<keyword id="KW-0689">Ribosomal protein</keyword>
<keyword id="KW-0694">RNA-binding</keyword>
<keyword id="KW-0699">rRNA-binding</keyword>
<proteinExistence type="inferred from homology"/>
<evidence type="ECO:0000255" key="1">
    <source>
        <dbReference type="HAMAP-Rule" id="MF_01367"/>
    </source>
</evidence>
<evidence type="ECO:0000305" key="2"/>
<name>RL14_BRUME</name>
<comment type="function">
    <text evidence="1">Binds to 23S rRNA. Forms part of two intersubunit bridges in the 70S ribosome.</text>
</comment>
<comment type="subunit">
    <text evidence="1">Part of the 50S ribosomal subunit. Forms a cluster with proteins L3 and L19. In the 70S ribosome, L14 and L19 interact and together make contacts with the 16S rRNA in bridges B5 and B8.</text>
</comment>
<comment type="similarity">
    <text evidence="1">Belongs to the universal ribosomal protein uL14 family.</text>
</comment>
<protein>
    <recommendedName>
        <fullName evidence="1">Large ribosomal subunit protein uL14</fullName>
    </recommendedName>
    <alternativeName>
        <fullName evidence="2">50S ribosomal protein L14</fullName>
    </alternativeName>
</protein>
<organism>
    <name type="scientific">Brucella melitensis biotype 1 (strain ATCC 23456 / CCUG 17765 / NCTC 10094 / 16M)</name>
    <dbReference type="NCBI Taxonomy" id="224914"/>
    <lineage>
        <taxon>Bacteria</taxon>
        <taxon>Pseudomonadati</taxon>
        <taxon>Pseudomonadota</taxon>
        <taxon>Alphaproteobacteria</taxon>
        <taxon>Hyphomicrobiales</taxon>
        <taxon>Brucellaceae</taxon>
        <taxon>Brucella/Ochrobactrum group</taxon>
        <taxon>Brucella</taxon>
    </lineage>
</organism>
<reference key="1">
    <citation type="journal article" date="2002" name="Proc. Natl. Acad. Sci. U.S.A.">
        <title>The genome sequence of the facultative intracellular pathogen Brucella melitensis.</title>
        <authorList>
            <person name="DelVecchio V.G."/>
            <person name="Kapatral V."/>
            <person name="Redkar R.J."/>
            <person name="Patra G."/>
            <person name="Mujer C."/>
            <person name="Los T."/>
            <person name="Ivanova N."/>
            <person name="Anderson I."/>
            <person name="Bhattacharyya A."/>
            <person name="Lykidis A."/>
            <person name="Reznik G."/>
            <person name="Jablonski L."/>
            <person name="Larsen N."/>
            <person name="D'Souza M."/>
            <person name="Bernal A."/>
            <person name="Mazur M."/>
            <person name="Goltsman E."/>
            <person name="Selkov E."/>
            <person name="Elzer P.H."/>
            <person name="Hagius S."/>
            <person name="O'Callaghan D."/>
            <person name="Letesson J.-J."/>
            <person name="Haselkorn R."/>
            <person name="Kyrpides N.C."/>
            <person name="Overbeek R."/>
        </authorList>
    </citation>
    <scope>NUCLEOTIDE SEQUENCE [LARGE SCALE GENOMIC DNA]</scope>
    <source>
        <strain>ATCC 23456 / CCUG 17765 / NCTC 10094 / 16M</strain>
    </source>
</reference>
<feature type="chain" id="PRO_0000266458" description="Large ribosomal subunit protein uL14">
    <location>
        <begin position="1"/>
        <end position="122"/>
    </location>
</feature>
<sequence length="122" mass="13460">MIQMQTNLDVADNSGARRVMCIKVLGGSKRRYASVGDIIVVSIKEAIPRGRVKKGDVMKAVVVRTAKDIRRPDGSVIRFDNNAAVLIDNKKEPIGTRIFGPVPRELRAKNHMKIISLAPEVL</sequence>